<gene>
    <name evidence="1" type="primary">acpS</name>
    <name type="ordered locus">OTT_0260</name>
</gene>
<protein>
    <recommendedName>
        <fullName evidence="1">Holo-[acyl-carrier-protein] synthase</fullName>
        <shortName evidence="1">Holo-ACP synthase</shortName>
        <ecNumber evidence="1">2.7.8.7</ecNumber>
    </recommendedName>
    <alternativeName>
        <fullName evidence="1">4'-phosphopantetheinyl transferase AcpS</fullName>
    </alternativeName>
</protein>
<comment type="function">
    <text evidence="1">Transfers the 4'-phosphopantetheine moiety from coenzyme A to a Ser of acyl-carrier-protein.</text>
</comment>
<comment type="catalytic activity">
    <reaction evidence="1">
        <text>apo-[ACP] + CoA = holo-[ACP] + adenosine 3',5'-bisphosphate + H(+)</text>
        <dbReference type="Rhea" id="RHEA:12068"/>
        <dbReference type="Rhea" id="RHEA-COMP:9685"/>
        <dbReference type="Rhea" id="RHEA-COMP:9690"/>
        <dbReference type="ChEBI" id="CHEBI:15378"/>
        <dbReference type="ChEBI" id="CHEBI:29999"/>
        <dbReference type="ChEBI" id="CHEBI:57287"/>
        <dbReference type="ChEBI" id="CHEBI:58343"/>
        <dbReference type="ChEBI" id="CHEBI:64479"/>
        <dbReference type="EC" id="2.7.8.7"/>
    </reaction>
</comment>
<comment type="cofactor">
    <cofactor evidence="1">
        <name>Mg(2+)</name>
        <dbReference type="ChEBI" id="CHEBI:18420"/>
    </cofactor>
</comment>
<comment type="subcellular location">
    <subcellularLocation>
        <location evidence="1">Cytoplasm</location>
    </subcellularLocation>
</comment>
<comment type="similarity">
    <text evidence="1">Belongs to the P-Pant transferase superfamily. AcpS family.</text>
</comment>
<reference key="1">
    <citation type="journal article" date="2008" name="DNA Res.">
        <title>The whole-genome sequencing of the obligate intracellular bacterium Orientia tsutsugamushi revealed massive gene amplification during reductive genome evolution.</title>
        <authorList>
            <person name="Nakayama K."/>
            <person name="Yamashita A."/>
            <person name="Kurokawa K."/>
            <person name="Morimoto T."/>
            <person name="Ogawa M."/>
            <person name="Fukuhara M."/>
            <person name="Urakami H."/>
            <person name="Ohnishi M."/>
            <person name="Uchiyama I."/>
            <person name="Ogura Y."/>
            <person name="Ooka T."/>
            <person name="Oshima K."/>
            <person name="Tamura A."/>
            <person name="Hattori M."/>
            <person name="Hayashi T."/>
        </authorList>
    </citation>
    <scope>NUCLEOTIDE SEQUENCE [LARGE SCALE GENOMIC DNA]</scope>
    <source>
        <strain>Ikeda</strain>
    </source>
</reference>
<proteinExistence type="inferred from homology"/>
<feature type="chain" id="PRO_1000093901" description="Holo-[acyl-carrier-protein] synthase">
    <location>
        <begin position="1"/>
        <end position="131"/>
    </location>
</feature>
<feature type="binding site" evidence="1">
    <location>
        <position position="8"/>
    </location>
    <ligand>
        <name>Mg(2+)</name>
        <dbReference type="ChEBI" id="CHEBI:18420"/>
    </ligand>
</feature>
<feature type="binding site" evidence="1">
    <location>
        <position position="59"/>
    </location>
    <ligand>
        <name>Mg(2+)</name>
        <dbReference type="ChEBI" id="CHEBI:18420"/>
    </ligand>
</feature>
<dbReference type="EC" id="2.7.8.7" evidence="1"/>
<dbReference type="EMBL" id="AP008981">
    <property type="protein sequence ID" value="BAG39718.1"/>
    <property type="molecule type" value="Genomic_DNA"/>
</dbReference>
<dbReference type="RefSeq" id="WP_012460966.1">
    <property type="nucleotide sequence ID" value="NC_010793.1"/>
</dbReference>
<dbReference type="SMR" id="B3CQ27"/>
<dbReference type="KEGG" id="ott:OTT_0260"/>
<dbReference type="HOGENOM" id="CLU_089696_0_2_5"/>
<dbReference type="OrthoDB" id="517356at2"/>
<dbReference type="Proteomes" id="UP000001033">
    <property type="component" value="Chromosome"/>
</dbReference>
<dbReference type="GO" id="GO:0005737">
    <property type="term" value="C:cytoplasm"/>
    <property type="evidence" value="ECO:0007669"/>
    <property type="project" value="UniProtKB-SubCell"/>
</dbReference>
<dbReference type="GO" id="GO:0008897">
    <property type="term" value="F:holo-[acyl-carrier-protein] synthase activity"/>
    <property type="evidence" value="ECO:0007669"/>
    <property type="project" value="UniProtKB-UniRule"/>
</dbReference>
<dbReference type="GO" id="GO:0000287">
    <property type="term" value="F:magnesium ion binding"/>
    <property type="evidence" value="ECO:0007669"/>
    <property type="project" value="UniProtKB-UniRule"/>
</dbReference>
<dbReference type="GO" id="GO:0006633">
    <property type="term" value="P:fatty acid biosynthetic process"/>
    <property type="evidence" value="ECO:0007669"/>
    <property type="project" value="UniProtKB-UniRule"/>
</dbReference>
<dbReference type="Gene3D" id="3.90.470.20">
    <property type="entry name" value="4'-phosphopantetheinyl transferase domain"/>
    <property type="match status" value="1"/>
</dbReference>
<dbReference type="HAMAP" id="MF_00101">
    <property type="entry name" value="AcpS"/>
    <property type="match status" value="1"/>
</dbReference>
<dbReference type="InterPro" id="IPR008278">
    <property type="entry name" value="4-PPantetheinyl_Trfase_dom"/>
</dbReference>
<dbReference type="InterPro" id="IPR037143">
    <property type="entry name" value="4-PPantetheinyl_Trfase_dom_sf"/>
</dbReference>
<dbReference type="InterPro" id="IPR002582">
    <property type="entry name" value="ACPS"/>
</dbReference>
<dbReference type="InterPro" id="IPR004568">
    <property type="entry name" value="Ppantetheine-prot_Trfase_dom"/>
</dbReference>
<dbReference type="NCBIfam" id="TIGR00516">
    <property type="entry name" value="acpS"/>
    <property type="match status" value="1"/>
</dbReference>
<dbReference type="NCBIfam" id="TIGR00556">
    <property type="entry name" value="pantethn_trn"/>
    <property type="match status" value="1"/>
</dbReference>
<dbReference type="Pfam" id="PF01648">
    <property type="entry name" value="ACPS"/>
    <property type="match status" value="1"/>
</dbReference>
<dbReference type="SUPFAM" id="SSF56214">
    <property type="entry name" value="4'-phosphopantetheinyl transferase"/>
    <property type="match status" value="1"/>
</dbReference>
<name>ACPS_ORITI</name>
<accession>B3CQ27</accession>
<organism>
    <name type="scientific">Orientia tsutsugamushi (strain Ikeda)</name>
    <name type="common">Rickettsia tsutsugamushi</name>
    <dbReference type="NCBI Taxonomy" id="334380"/>
    <lineage>
        <taxon>Bacteria</taxon>
        <taxon>Pseudomonadati</taxon>
        <taxon>Pseudomonadota</taxon>
        <taxon>Alphaproteobacteria</taxon>
        <taxon>Rickettsiales</taxon>
        <taxon>Rickettsiaceae</taxon>
        <taxon>Rickettsieae</taxon>
        <taxon>Orientia</taxon>
    </lineage>
</organism>
<evidence type="ECO:0000255" key="1">
    <source>
        <dbReference type="HAMAP-Rule" id="MF_00101"/>
    </source>
</evidence>
<sequence length="131" mass="14567">MIYGIGTDIIHIPRIEQLINKYSTKFINRILGKNEITIYQSLSIKQQTNFVAKRFAGKESVAKAIGTGITSSLLLRDIEILNNNLGKPIVYIPNAAKILLNNIKLTEYKIDISLSDDYPLAIAFTVISASI</sequence>
<keyword id="KW-0963">Cytoplasm</keyword>
<keyword id="KW-0275">Fatty acid biosynthesis</keyword>
<keyword id="KW-0276">Fatty acid metabolism</keyword>
<keyword id="KW-0444">Lipid biosynthesis</keyword>
<keyword id="KW-0443">Lipid metabolism</keyword>
<keyword id="KW-0460">Magnesium</keyword>
<keyword id="KW-0479">Metal-binding</keyword>
<keyword id="KW-0808">Transferase</keyword>